<name>SYBA_DICDI</name>
<sequence>MSEPVNKVKQTQQQVDDVTNTMHIAVGKMLDNQQKVSELTDKSENMKQGAQQFKKKTNEIKRLMWCRNIKLTLIIIAVVVLLLVVIIVPIVLKFT</sequence>
<proteinExistence type="evidence at transcript level"/>
<accession>Q6TMJ9</accession>
<accession>Q54VV6</accession>
<feature type="chain" id="PRO_0000327936" description="Synaptobrevin-A">
    <location>
        <begin position="1"/>
        <end position="95"/>
    </location>
</feature>
<feature type="topological domain" description="Cytoplasmic" evidence="2">
    <location>
        <begin position="1"/>
        <end position="70"/>
    </location>
</feature>
<feature type="transmembrane region" description="Helical; Anchor for type IV membrane protein" evidence="2">
    <location>
        <begin position="71"/>
        <end position="91"/>
    </location>
</feature>
<feature type="topological domain" description="Vesicular" evidence="2">
    <location>
        <begin position="92"/>
        <end position="95"/>
    </location>
</feature>
<feature type="domain" description="v-SNARE coiled-coil homology" evidence="3">
    <location>
        <begin position="7"/>
        <end position="67"/>
    </location>
</feature>
<protein>
    <recommendedName>
        <fullName>Synaptobrevin-A</fullName>
    </recommendedName>
</protein>
<gene>
    <name type="primary">sybA</name>
    <name type="ORF">DDB_G0280061</name>
</gene>
<keyword id="KW-0175">Coiled coil</keyword>
<keyword id="KW-0968">Cytoplasmic vesicle</keyword>
<keyword id="KW-0472">Membrane</keyword>
<keyword id="KW-1185">Reference proteome</keyword>
<keyword id="KW-0812">Transmembrane</keyword>
<keyword id="KW-1133">Transmembrane helix</keyword>
<organism>
    <name type="scientific">Dictyostelium discoideum</name>
    <name type="common">Social amoeba</name>
    <dbReference type="NCBI Taxonomy" id="44689"/>
    <lineage>
        <taxon>Eukaryota</taxon>
        <taxon>Amoebozoa</taxon>
        <taxon>Evosea</taxon>
        <taxon>Eumycetozoa</taxon>
        <taxon>Dictyostelia</taxon>
        <taxon>Dictyosteliales</taxon>
        <taxon>Dictyosteliaceae</taxon>
        <taxon>Dictyostelium</taxon>
    </lineage>
</organism>
<dbReference type="EMBL" id="AY392436">
    <property type="protein sequence ID" value="AAQ98877.1"/>
    <property type="molecule type" value="Genomic_DNA"/>
</dbReference>
<dbReference type="EMBL" id="AAFI02000035">
    <property type="protein sequence ID" value="EAL67257.1"/>
    <property type="molecule type" value="Genomic_DNA"/>
</dbReference>
<dbReference type="RefSeq" id="XP_641249.1">
    <property type="nucleotide sequence ID" value="XM_636157.1"/>
</dbReference>
<dbReference type="SMR" id="Q6TMJ9"/>
<dbReference type="FunCoup" id="Q6TMJ9">
    <property type="interactions" value="129"/>
</dbReference>
<dbReference type="STRING" id="44689.Q6TMJ9"/>
<dbReference type="PaxDb" id="44689-DDB0214903"/>
<dbReference type="EnsemblProtists" id="EAL67257">
    <property type="protein sequence ID" value="EAL67257"/>
    <property type="gene ID" value="DDB_G0280061"/>
</dbReference>
<dbReference type="GeneID" id="8622381"/>
<dbReference type="KEGG" id="ddi:DDB_G0280061"/>
<dbReference type="dictyBase" id="DDB_G0280061">
    <property type="gene designation" value="sybA"/>
</dbReference>
<dbReference type="VEuPathDB" id="AmoebaDB:DDB_G0280061"/>
<dbReference type="eggNOG" id="KOG0860">
    <property type="taxonomic scope" value="Eukaryota"/>
</dbReference>
<dbReference type="HOGENOM" id="CLU_064620_5_0_1"/>
<dbReference type="InParanoid" id="Q6TMJ9"/>
<dbReference type="OMA" id="VRKKMWW"/>
<dbReference type="Reactome" id="R-DDI-199992">
    <property type="pathway name" value="trans-Golgi Network Vesicle Budding"/>
</dbReference>
<dbReference type="Reactome" id="R-DDI-210500">
    <property type="pathway name" value="Glutamate Neurotransmitter Release Cycle"/>
</dbReference>
<dbReference type="Reactome" id="R-DDI-449836">
    <property type="pathway name" value="Other interleukin signaling"/>
</dbReference>
<dbReference type="Reactome" id="R-DDI-6798695">
    <property type="pathway name" value="Neutrophil degranulation"/>
</dbReference>
<dbReference type="Reactome" id="R-DDI-6811440">
    <property type="pathway name" value="Retrograde transport at the Trans-Golgi-Network"/>
</dbReference>
<dbReference type="Reactome" id="R-DDI-8856825">
    <property type="pathway name" value="Cargo recognition for clathrin-mediated endocytosis"/>
</dbReference>
<dbReference type="Reactome" id="R-DDI-8856828">
    <property type="pathway name" value="Clathrin-mediated endocytosis"/>
</dbReference>
<dbReference type="Reactome" id="R-DDI-9013149">
    <property type="pathway name" value="RAC1 GTPase cycle"/>
</dbReference>
<dbReference type="Reactome" id="R-DDI-9013404">
    <property type="pathway name" value="RAC2 GTPase cycle"/>
</dbReference>
<dbReference type="Reactome" id="R-DDI-9013406">
    <property type="pathway name" value="RHOQ GTPase cycle"/>
</dbReference>
<dbReference type="Reactome" id="R-DDI-9013407">
    <property type="pathway name" value="RHOH GTPase cycle"/>
</dbReference>
<dbReference type="Reactome" id="R-DDI-9013408">
    <property type="pathway name" value="RHOG GTPase cycle"/>
</dbReference>
<dbReference type="Reactome" id="R-DDI-9013423">
    <property type="pathway name" value="RAC3 GTPase cycle"/>
</dbReference>
<dbReference type="Reactome" id="R-DDI-9609523">
    <property type="pathway name" value="Insertion of tail-anchored proteins into the endoplasmic reticulum membrane"/>
</dbReference>
<dbReference type="PRO" id="PR:Q6TMJ9"/>
<dbReference type="Proteomes" id="UP000002195">
    <property type="component" value="Chromosome 3"/>
</dbReference>
<dbReference type="GO" id="GO:0005886">
    <property type="term" value="C:plasma membrane"/>
    <property type="evidence" value="ECO:0000318"/>
    <property type="project" value="GO_Central"/>
</dbReference>
<dbReference type="GO" id="GO:0031201">
    <property type="term" value="C:SNARE complex"/>
    <property type="evidence" value="ECO:0000318"/>
    <property type="project" value="GO_Central"/>
</dbReference>
<dbReference type="GO" id="GO:0030658">
    <property type="term" value="C:transport vesicle membrane"/>
    <property type="evidence" value="ECO:0007669"/>
    <property type="project" value="UniProtKB-SubCell"/>
</dbReference>
<dbReference type="GO" id="GO:0005484">
    <property type="term" value="F:SNAP receptor activity"/>
    <property type="evidence" value="ECO:0000318"/>
    <property type="project" value="GO_Central"/>
</dbReference>
<dbReference type="GO" id="GO:0019905">
    <property type="term" value="F:syntaxin binding"/>
    <property type="evidence" value="ECO:0000318"/>
    <property type="project" value="GO_Central"/>
</dbReference>
<dbReference type="GO" id="GO:0006971">
    <property type="term" value="P:hypotonic response"/>
    <property type="evidence" value="ECO:0007007"/>
    <property type="project" value="dictyBase"/>
</dbReference>
<dbReference type="GO" id="GO:0006906">
    <property type="term" value="P:vesicle fusion"/>
    <property type="evidence" value="ECO:0000318"/>
    <property type="project" value="GO_Central"/>
</dbReference>
<dbReference type="CDD" id="cd15843">
    <property type="entry name" value="R-SNARE"/>
    <property type="match status" value="1"/>
</dbReference>
<dbReference type="Gene3D" id="1.20.5.110">
    <property type="match status" value="1"/>
</dbReference>
<dbReference type="InterPro" id="IPR001388">
    <property type="entry name" value="Synaptobrevin-like"/>
</dbReference>
<dbReference type="InterPro" id="IPR016444">
    <property type="entry name" value="Synaptobrevin/VAMP"/>
</dbReference>
<dbReference type="InterPro" id="IPR042855">
    <property type="entry name" value="V_SNARE_CC"/>
</dbReference>
<dbReference type="PANTHER" id="PTHR45701">
    <property type="entry name" value="SYNAPTOBREVIN FAMILY MEMBER"/>
    <property type="match status" value="1"/>
</dbReference>
<dbReference type="Pfam" id="PF00957">
    <property type="entry name" value="Synaptobrevin"/>
    <property type="match status" value="1"/>
</dbReference>
<dbReference type="PIRSF" id="PIRSF005409">
    <property type="entry name" value="Synaptobrevin_euk"/>
    <property type="match status" value="1"/>
</dbReference>
<dbReference type="PRINTS" id="PR00219">
    <property type="entry name" value="SYNAPTOBREVN"/>
</dbReference>
<dbReference type="SUPFAM" id="SSF58038">
    <property type="entry name" value="SNARE fusion complex"/>
    <property type="match status" value="1"/>
</dbReference>
<dbReference type="PROSITE" id="PS50892">
    <property type="entry name" value="V_SNARE"/>
    <property type="match status" value="1"/>
</dbReference>
<comment type="function">
    <text evidence="1">Involved in the targeting and/or fusion of transport vesicles to their target membrane.</text>
</comment>
<comment type="subcellular location">
    <subcellularLocation>
        <location evidence="1">Cytoplasmic vesicle</location>
        <location evidence="1">Secretory vesicle membrane</location>
        <topology evidence="1">Single-pass type IV membrane protein</topology>
    </subcellularLocation>
</comment>
<comment type="induction">
    <text evidence="4">Regulated by the srfA transcription factor.</text>
</comment>
<comment type="similarity">
    <text evidence="5">Belongs to the synaptobrevin family.</text>
</comment>
<evidence type="ECO:0000250" key="1"/>
<evidence type="ECO:0000255" key="2"/>
<evidence type="ECO:0000255" key="3">
    <source>
        <dbReference type="PROSITE-ProRule" id="PRU00290"/>
    </source>
</evidence>
<evidence type="ECO:0000269" key="4">
    <source>
    </source>
</evidence>
<evidence type="ECO:0000305" key="5"/>
<reference key="1">
    <citation type="journal article" date="2004" name="Eukaryot. Cell">
        <title>Identification of genes dependent on the MADS box transcription factor SrfA in Dictyostelium discoideum development.</title>
        <authorList>
            <person name="Escalante R."/>
            <person name="Iranfar N."/>
            <person name="Sastre L."/>
            <person name="Loomis W.F."/>
        </authorList>
    </citation>
    <scope>NUCLEOTIDE SEQUENCE [GENOMIC DNA]</scope>
    <scope>INDUCTION</scope>
</reference>
<reference key="2">
    <citation type="journal article" date="2005" name="Nature">
        <title>The genome of the social amoeba Dictyostelium discoideum.</title>
        <authorList>
            <person name="Eichinger L."/>
            <person name="Pachebat J.A."/>
            <person name="Gloeckner G."/>
            <person name="Rajandream M.A."/>
            <person name="Sucgang R."/>
            <person name="Berriman M."/>
            <person name="Song J."/>
            <person name="Olsen R."/>
            <person name="Szafranski K."/>
            <person name="Xu Q."/>
            <person name="Tunggal B."/>
            <person name="Kummerfeld S."/>
            <person name="Madera M."/>
            <person name="Konfortov B.A."/>
            <person name="Rivero F."/>
            <person name="Bankier A.T."/>
            <person name="Lehmann R."/>
            <person name="Hamlin N."/>
            <person name="Davies R."/>
            <person name="Gaudet P."/>
            <person name="Fey P."/>
            <person name="Pilcher K."/>
            <person name="Chen G."/>
            <person name="Saunders D."/>
            <person name="Sodergren E.J."/>
            <person name="Davis P."/>
            <person name="Kerhornou A."/>
            <person name="Nie X."/>
            <person name="Hall N."/>
            <person name="Anjard C."/>
            <person name="Hemphill L."/>
            <person name="Bason N."/>
            <person name="Farbrother P."/>
            <person name="Desany B."/>
            <person name="Just E."/>
            <person name="Morio T."/>
            <person name="Rost R."/>
            <person name="Churcher C.M."/>
            <person name="Cooper J."/>
            <person name="Haydock S."/>
            <person name="van Driessche N."/>
            <person name="Cronin A."/>
            <person name="Goodhead I."/>
            <person name="Muzny D.M."/>
            <person name="Mourier T."/>
            <person name="Pain A."/>
            <person name="Lu M."/>
            <person name="Harper D."/>
            <person name="Lindsay R."/>
            <person name="Hauser H."/>
            <person name="James K.D."/>
            <person name="Quiles M."/>
            <person name="Madan Babu M."/>
            <person name="Saito T."/>
            <person name="Buchrieser C."/>
            <person name="Wardroper A."/>
            <person name="Felder M."/>
            <person name="Thangavelu M."/>
            <person name="Johnson D."/>
            <person name="Knights A."/>
            <person name="Loulseged H."/>
            <person name="Mungall K.L."/>
            <person name="Oliver K."/>
            <person name="Price C."/>
            <person name="Quail M.A."/>
            <person name="Urushihara H."/>
            <person name="Hernandez J."/>
            <person name="Rabbinowitsch E."/>
            <person name="Steffen D."/>
            <person name="Sanders M."/>
            <person name="Ma J."/>
            <person name="Kohara Y."/>
            <person name="Sharp S."/>
            <person name="Simmonds M.N."/>
            <person name="Spiegler S."/>
            <person name="Tivey A."/>
            <person name="Sugano S."/>
            <person name="White B."/>
            <person name="Walker D."/>
            <person name="Woodward J.R."/>
            <person name="Winckler T."/>
            <person name="Tanaka Y."/>
            <person name="Shaulsky G."/>
            <person name="Schleicher M."/>
            <person name="Weinstock G.M."/>
            <person name="Rosenthal A."/>
            <person name="Cox E.C."/>
            <person name="Chisholm R.L."/>
            <person name="Gibbs R.A."/>
            <person name="Loomis W.F."/>
            <person name="Platzer M."/>
            <person name="Kay R.R."/>
            <person name="Williams J.G."/>
            <person name="Dear P.H."/>
            <person name="Noegel A.A."/>
            <person name="Barrell B.G."/>
            <person name="Kuspa A."/>
        </authorList>
    </citation>
    <scope>NUCLEOTIDE SEQUENCE [LARGE SCALE GENOMIC DNA]</scope>
    <source>
        <strain>AX4</strain>
    </source>
</reference>